<accession>Q6GZQ4</accession>
<sequence>MSGFRILDSAGPQGQSSYTWEAKIAQVQHDMVAMINTFNQQIAGLSGTIMGRLDQSVIPKQQPPSSAAAISESEFED</sequence>
<evidence type="ECO:0000256" key="1">
    <source>
        <dbReference type="SAM" id="MobiDB-lite"/>
    </source>
</evidence>
<organism>
    <name type="scientific">Frog virus 3 (isolate Goorha)</name>
    <name type="common">FV-3</name>
    <dbReference type="NCBI Taxonomy" id="654924"/>
    <lineage>
        <taxon>Viruses</taxon>
        <taxon>Varidnaviria</taxon>
        <taxon>Bamfordvirae</taxon>
        <taxon>Nucleocytoviricota</taxon>
        <taxon>Megaviricetes</taxon>
        <taxon>Pimascovirales</taxon>
        <taxon>Iridoviridae</taxon>
        <taxon>Alphairidovirinae</taxon>
        <taxon>Ranavirus</taxon>
        <taxon>Frog virus 3</taxon>
    </lineage>
</organism>
<organismHost>
    <name type="scientific">Dryophytes versicolor</name>
    <name type="common">chameleon treefrog</name>
    <dbReference type="NCBI Taxonomy" id="30343"/>
</organismHost>
<organismHost>
    <name type="scientific">Lithobates pipiens</name>
    <name type="common">Northern leopard frog</name>
    <name type="synonym">Rana pipiens</name>
    <dbReference type="NCBI Taxonomy" id="8404"/>
</organismHost>
<organismHost>
    <name type="scientific">Lithobates sylvaticus</name>
    <name type="common">Wood frog</name>
    <name type="synonym">Rana sylvatica</name>
    <dbReference type="NCBI Taxonomy" id="45438"/>
</organismHost>
<organismHost>
    <name type="scientific">Notophthalmus viridescens</name>
    <name type="common">Eastern newt</name>
    <name type="synonym">Triturus viridescens</name>
    <dbReference type="NCBI Taxonomy" id="8316"/>
</organismHost>
<dbReference type="EMBL" id="AY548484">
    <property type="protein sequence ID" value="AAT09731.1"/>
    <property type="molecule type" value="Genomic_DNA"/>
</dbReference>
<dbReference type="RefSeq" id="YP_031650.1">
    <property type="nucleotide sequence ID" value="NC_005946.1"/>
</dbReference>
<dbReference type="KEGG" id="vg:2947771"/>
<dbReference type="Proteomes" id="UP000008770">
    <property type="component" value="Segment"/>
</dbReference>
<protein>
    <recommendedName>
        <fullName>Uncharacterized protein 071R</fullName>
    </recommendedName>
</protein>
<proteinExistence type="predicted"/>
<keyword id="KW-1185">Reference proteome</keyword>
<gene>
    <name type="ORF">FV3-071R</name>
</gene>
<reference key="1">
    <citation type="journal article" date="2004" name="Virology">
        <title>Comparative genomic analyses of frog virus 3, type species of the genus Ranavirus (family Iridoviridae).</title>
        <authorList>
            <person name="Tan W.G."/>
            <person name="Barkman T.J."/>
            <person name="Gregory Chinchar V."/>
            <person name="Essani K."/>
        </authorList>
    </citation>
    <scope>NUCLEOTIDE SEQUENCE [LARGE SCALE GENOMIC DNA]</scope>
</reference>
<feature type="chain" id="PRO_0000410538" description="Uncharacterized protein 071R">
    <location>
        <begin position="1"/>
        <end position="77"/>
    </location>
</feature>
<feature type="region of interest" description="Disordered" evidence="1">
    <location>
        <begin position="56"/>
        <end position="77"/>
    </location>
</feature>
<feature type="compositionally biased region" description="Low complexity" evidence="1">
    <location>
        <begin position="65"/>
        <end position="77"/>
    </location>
</feature>
<name>071R_FRG3G</name>